<evidence type="ECO:0000255" key="1">
    <source>
        <dbReference type="HAMAP-Rule" id="MF_00736"/>
    </source>
</evidence>
<evidence type="ECO:0000305" key="2"/>
<feature type="chain" id="PRO_0000258196" description="Large ribosomal subunit protein uL11">
    <location>
        <begin position="1"/>
        <end position="143"/>
    </location>
</feature>
<comment type="function">
    <text evidence="1">Forms part of the ribosomal stalk which helps the ribosome interact with GTP-bound translation factors.</text>
</comment>
<comment type="subunit">
    <text evidence="1">Part of the ribosomal stalk of the 50S ribosomal subunit. Interacts with L10 and the large rRNA to form the base of the stalk. L10 forms an elongated spine to which L12 dimers bind in a sequential fashion forming a multimeric L10(L12)X complex.</text>
</comment>
<comment type="PTM">
    <text evidence="1">One or more lysine residues are methylated.</text>
</comment>
<comment type="similarity">
    <text evidence="1">Belongs to the universal ribosomal protein uL11 family.</text>
</comment>
<organism>
    <name type="scientific">Rhizobium johnstonii (strain DSM 114642 / LMG 32736 / 3841)</name>
    <name type="common">Rhizobium leguminosarum bv. viciae</name>
    <dbReference type="NCBI Taxonomy" id="216596"/>
    <lineage>
        <taxon>Bacteria</taxon>
        <taxon>Pseudomonadati</taxon>
        <taxon>Pseudomonadota</taxon>
        <taxon>Alphaproteobacteria</taxon>
        <taxon>Hyphomicrobiales</taxon>
        <taxon>Rhizobiaceae</taxon>
        <taxon>Rhizobium/Agrobacterium group</taxon>
        <taxon>Rhizobium</taxon>
        <taxon>Rhizobium johnstonii</taxon>
    </lineage>
</organism>
<keyword id="KW-0488">Methylation</keyword>
<keyword id="KW-0687">Ribonucleoprotein</keyword>
<keyword id="KW-0689">Ribosomal protein</keyword>
<keyword id="KW-0694">RNA-binding</keyword>
<keyword id="KW-0699">rRNA-binding</keyword>
<protein>
    <recommendedName>
        <fullName evidence="1">Large ribosomal subunit protein uL11</fullName>
    </recommendedName>
    <alternativeName>
        <fullName evidence="2">50S ribosomal protein L11</fullName>
    </alternativeName>
</protein>
<dbReference type="EMBL" id="AM236080">
    <property type="protein sequence ID" value="CAK07256.1"/>
    <property type="molecule type" value="Genomic_DNA"/>
</dbReference>
<dbReference type="RefSeq" id="WP_003547518.1">
    <property type="nucleotide sequence ID" value="NC_008380.1"/>
</dbReference>
<dbReference type="SMR" id="Q1MIF4"/>
<dbReference type="EnsemblBacteria" id="CAK07256">
    <property type="protein sequence ID" value="CAK07256"/>
    <property type="gene ID" value="RL1761"/>
</dbReference>
<dbReference type="GeneID" id="91148116"/>
<dbReference type="KEGG" id="rle:RL1761"/>
<dbReference type="eggNOG" id="COG0080">
    <property type="taxonomic scope" value="Bacteria"/>
</dbReference>
<dbReference type="HOGENOM" id="CLU_074237_2_0_5"/>
<dbReference type="Proteomes" id="UP000006575">
    <property type="component" value="Chromosome"/>
</dbReference>
<dbReference type="GO" id="GO:0022625">
    <property type="term" value="C:cytosolic large ribosomal subunit"/>
    <property type="evidence" value="ECO:0007669"/>
    <property type="project" value="TreeGrafter"/>
</dbReference>
<dbReference type="GO" id="GO:0070180">
    <property type="term" value="F:large ribosomal subunit rRNA binding"/>
    <property type="evidence" value="ECO:0007669"/>
    <property type="project" value="UniProtKB-UniRule"/>
</dbReference>
<dbReference type="GO" id="GO:0003735">
    <property type="term" value="F:structural constituent of ribosome"/>
    <property type="evidence" value="ECO:0007669"/>
    <property type="project" value="InterPro"/>
</dbReference>
<dbReference type="GO" id="GO:0006412">
    <property type="term" value="P:translation"/>
    <property type="evidence" value="ECO:0007669"/>
    <property type="project" value="UniProtKB-UniRule"/>
</dbReference>
<dbReference type="CDD" id="cd00349">
    <property type="entry name" value="Ribosomal_L11"/>
    <property type="match status" value="1"/>
</dbReference>
<dbReference type="FunFam" id="3.30.1550.10:FF:000001">
    <property type="entry name" value="50S ribosomal protein L11"/>
    <property type="match status" value="1"/>
</dbReference>
<dbReference type="Gene3D" id="1.10.10.250">
    <property type="entry name" value="Ribosomal protein L11, C-terminal domain"/>
    <property type="match status" value="1"/>
</dbReference>
<dbReference type="Gene3D" id="3.30.1550.10">
    <property type="entry name" value="Ribosomal protein L11/L12, N-terminal domain"/>
    <property type="match status" value="1"/>
</dbReference>
<dbReference type="HAMAP" id="MF_00736">
    <property type="entry name" value="Ribosomal_uL11"/>
    <property type="match status" value="1"/>
</dbReference>
<dbReference type="InterPro" id="IPR000911">
    <property type="entry name" value="Ribosomal_uL11"/>
</dbReference>
<dbReference type="InterPro" id="IPR006519">
    <property type="entry name" value="Ribosomal_uL11_bac-typ"/>
</dbReference>
<dbReference type="InterPro" id="IPR020783">
    <property type="entry name" value="Ribosomal_uL11_C"/>
</dbReference>
<dbReference type="InterPro" id="IPR036769">
    <property type="entry name" value="Ribosomal_uL11_C_sf"/>
</dbReference>
<dbReference type="InterPro" id="IPR020784">
    <property type="entry name" value="Ribosomal_uL11_N"/>
</dbReference>
<dbReference type="InterPro" id="IPR036796">
    <property type="entry name" value="Ribosomal_uL11_N_sf"/>
</dbReference>
<dbReference type="NCBIfam" id="TIGR01632">
    <property type="entry name" value="L11_bact"/>
    <property type="match status" value="1"/>
</dbReference>
<dbReference type="PANTHER" id="PTHR11661">
    <property type="entry name" value="60S RIBOSOMAL PROTEIN L12"/>
    <property type="match status" value="1"/>
</dbReference>
<dbReference type="PANTHER" id="PTHR11661:SF1">
    <property type="entry name" value="LARGE RIBOSOMAL SUBUNIT PROTEIN UL11M"/>
    <property type="match status" value="1"/>
</dbReference>
<dbReference type="Pfam" id="PF00298">
    <property type="entry name" value="Ribosomal_L11"/>
    <property type="match status" value="1"/>
</dbReference>
<dbReference type="Pfam" id="PF03946">
    <property type="entry name" value="Ribosomal_L11_N"/>
    <property type="match status" value="1"/>
</dbReference>
<dbReference type="SMART" id="SM00649">
    <property type="entry name" value="RL11"/>
    <property type="match status" value="1"/>
</dbReference>
<dbReference type="SUPFAM" id="SSF54747">
    <property type="entry name" value="Ribosomal L11/L12e N-terminal domain"/>
    <property type="match status" value="1"/>
</dbReference>
<dbReference type="SUPFAM" id="SSF46906">
    <property type="entry name" value="Ribosomal protein L11, C-terminal domain"/>
    <property type="match status" value="1"/>
</dbReference>
<proteinExistence type="inferred from homology"/>
<reference key="1">
    <citation type="journal article" date="2006" name="Genome Biol.">
        <title>The genome of Rhizobium leguminosarum has recognizable core and accessory components.</title>
        <authorList>
            <person name="Young J.P.W."/>
            <person name="Crossman L.C."/>
            <person name="Johnston A.W.B."/>
            <person name="Thomson N.R."/>
            <person name="Ghazoui Z.F."/>
            <person name="Hull K.H."/>
            <person name="Wexler M."/>
            <person name="Curson A.R.J."/>
            <person name="Todd J.D."/>
            <person name="Poole P.S."/>
            <person name="Mauchline T.H."/>
            <person name="East A.K."/>
            <person name="Quail M.A."/>
            <person name="Churcher C."/>
            <person name="Arrowsmith C."/>
            <person name="Cherevach I."/>
            <person name="Chillingworth T."/>
            <person name="Clarke K."/>
            <person name="Cronin A."/>
            <person name="Davis P."/>
            <person name="Fraser A."/>
            <person name="Hance Z."/>
            <person name="Hauser H."/>
            <person name="Jagels K."/>
            <person name="Moule S."/>
            <person name="Mungall K."/>
            <person name="Norbertczak H."/>
            <person name="Rabbinowitsch E."/>
            <person name="Sanders M."/>
            <person name="Simmonds M."/>
            <person name="Whitehead S."/>
            <person name="Parkhill J."/>
        </authorList>
    </citation>
    <scope>NUCLEOTIDE SEQUENCE [LARGE SCALE GENOMIC DNA]</scope>
    <source>
        <strain>DSM 114642 / LMG 32736 / 3841</strain>
    </source>
</reference>
<name>RL11_RHIJ3</name>
<accession>Q1MIF4</accession>
<gene>
    <name evidence="1" type="primary">rplK</name>
    <name type="ordered locus">RL1761</name>
</gene>
<sequence>MAKKVAGQLKLQVKAGSANPSPPIGPALGQRGINIMEFCKAFNAATQEMEKGMPIPVVITYYQDKSFTFAMKQPPVSYWLKKEAKITSGSKTPGKGAKAGSLTKAQIKSIAEAKMKDLNAADIEGAMAMIEGSARAMGLEVVG</sequence>